<organismHost>
    <name type="scientific">Galliformes</name>
    <dbReference type="NCBI Taxonomy" id="8976"/>
</organismHost>
<protein>
    <recommendedName>
        <fullName>Uncharacterized protein ORF9</fullName>
    </recommendedName>
</protein>
<reference key="1">
    <citation type="journal article" date="1990" name="Nucleic Acids Res.">
        <title>Sequence of an avian adenovirus (CELO) DNA fragment (0-11.2%).</title>
        <authorList>
            <person name="Akopian T.A."/>
            <person name="Kruglyak V.A."/>
            <person name="Rivkina M.B."/>
            <person name="Naroditsky B.S."/>
            <person name="Tikhonenko T.I."/>
        </authorList>
    </citation>
    <scope>NUCLEOTIDE SEQUENCE [GENOMIC DNA]</scope>
</reference>
<reference key="2">
    <citation type="journal article" date="1996" name="J. Virol.">
        <title>The complete DNA sequence and genomic organization of the avian adenovirus CELO.</title>
        <authorList>
            <person name="Chiocca S."/>
            <person name="Kurzbauer R."/>
            <person name="Schaffner G."/>
            <person name="Baker A."/>
            <person name="Mautner V."/>
            <person name="Cotten M."/>
        </authorList>
    </citation>
    <scope>NUCLEOTIDE SEQUENCE [LARGE SCALE GENOMIC DNA]</scope>
</reference>
<evidence type="ECO:0000305" key="1"/>
<proteinExistence type="predicted"/>
<accession>P20746</accession>
<accession>Q64772</accession>
<keyword id="KW-1185">Reference proteome</keyword>
<organism>
    <name type="scientific">Fowl adenovirus A serotype 1 (strain CELO / Phelps)</name>
    <name type="common">FAdV-1</name>
    <name type="synonym">Avian adenovirus gal1 (strain Phelps)</name>
    <dbReference type="NCBI Taxonomy" id="10553"/>
    <lineage>
        <taxon>Viruses</taxon>
        <taxon>Varidnaviria</taxon>
        <taxon>Bamfordvirae</taxon>
        <taxon>Preplasmiviricota</taxon>
        <taxon>Tectiliviricetes</taxon>
        <taxon>Rowavirales</taxon>
        <taxon>Adenoviridae</taxon>
        <taxon>Aviadenovirus</taxon>
        <taxon>Fowl aviadenovirus A</taxon>
    </lineage>
</organism>
<gene>
    <name type="ORF">9</name>
</gene>
<sequence>MEPPHNSPVPFSIAKMGNPTLLLLSGLLSLTQAISIGEHENKTRHVIVWRHSSSHQCSDWRTVTEWFPPQKGNPVRPPYTQRVSLDTANNTLTVKPFETNNGCWETTSQGINHPPTTIQYRVWNITTTPTIQTINITKITVREGEDFTLYGPVSETMSIIEWEFIKDVTPQFILQYYLSINSTIVYASYQGRVTFNPGKNTLTLKGAKTTDSGTYKSTVNLDQVSVHNFRVGVTPIEKKEEATAETPASKPTPIPRVRADARSTALWVGLALCILTVIPALIGWYFRDRLCVPDPIIELEIPGQPHVTIHILKGPDDDCET</sequence>
<feature type="chain" id="PRO_0000221940" description="Uncharacterized protein ORF9">
    <location>
        <begin position="1"/>
        <end position="321"/>
    </location>
</feature>
<feature type="sequence conflict" description="In Ref. 1; CAA35088." evidence="1" ref="1">
    <original>N</original>
    <variation>T</variation>
    <location>
        <position position="228"/>
    </location>
</feature>
<feature type="sequence conflict" description="In Ref. 1; CAA35088." evidence="1" ref="1">
    <original>G</original>
    <variation>E</variation>
    <location>
        <position position="232"/>
    </location>
</feature>
<name>YO9_ADEG1</name>
<dbReference type="EMBL" id="X17217">
    <property type="protein sequence ID" value="CAA35088.1"/>
    <property type="molecule type" value="Genomic_DNA"/>
</dbReference>
<dbReference type="EMBL" id="U46933">
    <property type="protein sequence ID" value="AAC54930.1"/>
    <property type="molecule type" value="Genomic_DNA"/>
</dbReference>
<dbReference type="PIR" id="S10006">
    <property type="entry name" value="S10006"/>
</dbReference>
<dbReference type="RefSeq" id="NP_043904.1">
    <property type="nucleotide sequence ID" value="NC_001720.1"/>
</dbReference>
<dbReference type="KEGG" id="vg:1733469"/>
<dbReference type="Proteomes" id="UP000001594">
    <property type="component" value="Segment"/>
</dbReference>
<dbReference type="Gene3D" id="2.60.40.10">
    <property type="entry name" value="Immunoglobulins"/>
    <property type="match status" value="1"/>
</dbReference>
<dbReference type="InterPro" id="IPR036179">
    <property type="entry name" value="Ig-like_dom_sf"/>
</dbReference>
<dbReference type="InterPro" id="IPR013783">
    <property type="entry name" value="Ig-like_fold"/>
</dbReference>
<dbReference type="SUPFAM" id="SSF48726">
    <property type="entry name" value="Immunoglobulin"/>
    <property type="match status" value="1"/>
</dbReference>